<protein>
    <recommendedName>
        <fullName evidence="1">Integration host factor subunit alpha</fullName>
        <shortName evidence="1">IHF-alpha</shortName>
    </recommendedName>
</protein>
<sequence length="100" mass="11476">MGALTKAEMAERLYEELGLNKREAKELVELFFEEIRHALEDNEQVKLSGFGNFDLRDKRQRPGRNPKTGEEIPITARRVVTFRPGQKLKARVEAYAGTKS</sequence>
<proteinExistence type="inferred from homology"/>
<comment type="function">
    <text evidence="1">This protein is one of the two subunits of integration host factor, a specific DNA-binding protein that functions in genetic recombination as well as in transcriptional and translational control.</text>
</comment>
<comment type="subunit">
    <text evidence="1">Heterodimer of an alpha and a beta chain.</text>
</comment>
<comment type="similarity">
    <text evidence="1">Belongs to the bacterial histone-like protein family.</text>
</comment>
<keyword id="KW-0233">DNA recombination</keyword>
<keyword id="KW-0238">DNA-binding</keyword>
<keyword id="KW-0804">Transcription</keyword>
<keyword id="KW-0805">Transcription regulation</keyword>
<keyword id="KW-0810">Translation regulation</keyword>
<feature type="chain" id="PRO_0000277761" description="Integration host factor subunit alpha">
    <location>
        <begin position="1"/>
        <end position="100"/>
    </location>
</feature>
<feature type="region of interest" description="Disordered" evidence="2">
    <location>
        <begin position="54"/>
        <end position="73"/>
    </location>
</feature>
<reference key="1">
    <citation type="journal article" date="2005" name="Proc. Natl. Acad. Sci. U.S.A.">
        <title>Comparison of the complete genome sequences of Pseudomonas syringae pv. syringae B728a and pv. tomato DC3000.</title>
        <authorList>
            <person name="Feil H."/>
            <person name="Feil W.S."/>
            <person name="Chain P."/>
            <person name="Larimer F."/>
            <person name="Dibartolo G."/>
            <person name="Copeland A."/>
            <person name="Lykidis A."/>
            <person name="Trong S."/>
            <person name="Nolan M."/>
            <person name="Goltsman E."/>
            <person name="Thiel J."/>
            <person name="Malfatti S."/>
            <person name="Loper J.E."/>
            <person name="Lapidus A."/>
            <person name="Detter J.C."/>
            <person name="Land M."/>
            <person name="Richardson P.M."/>
            <person name="Kyrpides N.C."/>
            <person name="Ivanova N."/>
            <person name="Lindow S.E."/>
        </authorList>
    </citation>
    <scope>NUCLEOTIDE SEQUENCE [LARGE SCALE GENOMIC DNA]</scope>
    <source>
        <strain>B728a</strain>
    </source>
</reference>
<accession>Q4ZUG1</accession>
<organism>
    <name type="scientific">Pseudomonas syringae pv. syringae (strain B728a)</name>
    <dbReference type="NCBI Taxonomy" id="205918"/>
    <lineage>
        <taxon>Bacteria</taxon>
        <taxon>Pseudomonadati</taxon>
        <taxon>Pseudomonadota</taxon>
        <taxon>Gammaproteobacteria</taxon>
        <taxon>Pseudomonadales</taxon>
        <taxon>Pseudomonadaceae</taxon>
        <taxon>Pseudomonas</taxon>
        <taxon>Pseudomonas syringae</taxon>
    </lineage>
</organism>
<dbReference type="EMBL" id="CP000075">
    <property type="protein sequence ID" value="AAY37211.1"/>
    <property type="molecule type" value="Genomic_DNA"/>
</dbReference>
<dbReference type="RefSeq" id="WP_002553164.1">
    <property type="nucleotide sequence ID" value="NC_007005.1"/>
</dbReference>
<dbReference type="RefSeq" id="YP_235249.1">
    <property type="nucleotide sequence ID" value="NC_007005.1"/>
</dbReference>
<dbReference type="SMR" id="Q4ZUG1"/>
<dbReference type="STRING" id="205918.Psyr_2168"/>
<dbReference type="GeneID" id="98284088"/>
<dbReference type="KEGG" id="psb:Psyr_2168"/>
<dbReference type="PATRIC" id="fig|205918.7.peg.2218"/>
<dbReference type="eggNOG" id="COG0776">
    <property type="taxonomic scope" value="Bacteria"/>
</dbReference>
<dbReference type="HOGENOM" id="CLU_105066_1_3_6"/>
<dbReference type="OrthoDB" id="9797747at2"/>
<dbReference type="PRO" id="PR:Q4ZUG1"/>
<dbReference type="Proteomes" id="UP000000426">
    <property type="component" value="Chromosome"/>
</dbReference>
<dbReference type="GO" id="GO:0005829">
    <property type="term" value="C:cytosol"/>
    <property type="evidence" value="ECO:0007669"/>
    <property type="project" value="TreeGrafter"/>
</dbReference>
<dbReference type="GO" id="GO:0003677">
    <property type="term" value="F:DNA binding"/>
    <property type="evidence" value="ECO:0007669"/>
    <property type="project" value="UniProtKB-UniRule"/>
</dbReference>
<dbReference type="GO" id="GO:0030527">
    <property type="term" value="F:structural constituent of chromatin"/>
    <property type="evidence" value="ECO:0007669"/>
    <property type="project" value="InterPro"/>
</dbReference>
<dbReference type="GO" id="GO:0006310">
    <property type="term" value="P:DNA recombination"/>
    <property type="evidence" value="ECO:0007669"/>
    <property type="project" value="UniProtKB-UniRule"/>
</dbReference>
<dbReference type="GO" id="GO:0009893">
    <property type="term" value="P:positive regulation of metabolic process"/>
    <property type="evidence" value="ECO:0007669"/>
    <property type="project" value="UniProtKB-ARBA"/>
</dbReference>
<dbReference type="GO" id="GO:0006355">
    <property type="term" value="P:regulation of DNA-templated transcription"/>
    <property type="evidence" value="ECO:0007669"/>
    <property type="project" value="UniProtKB-UniRule"/>
</dbReference>
<dbReference type="GO" id="GO:0006417">
    <property type="term" value="P:regulation of translation"/>
    <property type="evidence" value="ECO:0007669"/>
    <property type="project" value="UniProtKB-UniRule"/>
</dbReference>
<dbReference type="CDD" id="cd13835">
    <property type="entry name" value="IHF_A"/>
    <property type="match status" value="1"/>
</dbReference>
<dbReference type="FunFam" id="4.10.520.10:FF:000002">
    <property type="entry name" value="Integration host factor subunit alpha"/>
    <property type="match status" value="1"/>
</dbReference>
<dbReference type="Gene3D" id="4.10.520.10">
    <property type="entry name" value="IHF-like DNA-binding proteins"/>
    <property type="match status" value="1"/>
</dbReference>
<dbReference type="HAMAP" id="MF_00380">
    <property type="entry name" value="IHF_alpha"/>
    <property type="match status" value="1"/>
</dbReference>
<dbReference type="InterPro" id="IPR000119">
    <property type="entry name" value="Hist_DNA-bd"/>
</dbReference>
<dbReference type="InterPro" id="IPR020816">
    <property type="entry name" value="Histone-like_DNA-bd_CS"/>
</dbReference>
<dbReference type="InterPro" id="IPR010992">
    <property type="entry name" value="IHF-like_DNA-bd_dom_sf"/>
</dbReference>
<dbReference type="InterPro" id="IPR005684">
    <property type="entry name" value="IHF_alpha"/>
</dbReference>
<dbReference type="NCBIfam" id="TIGR00987">
    <property type="entry name" value="himA"/>
    <property type="match status" value="1"/>
</dbReference>
<dbReference type="NCBIfam" id="NF001401">
    <property type="entry name" value="PRK00285.1"/>
    <property type="match status" value="1"/>
</dbReference>
<dbReference type="PANTHER" id="PTHR33175">
    <property type="entry name" value="DNA-BINDING PROTEIN HU"/>
    <property type="match status" value="1"/>
</dbReference>
<dbReference type="PANTHER" id="PTHR33175:SF2">
    <property type="entry name" value="INTEGRATION HOST FACTOR SUBUNIT ALPHA"/>
    <property type="match status" value="1"/>
</dbReference>
<dbReference type="Pfam" id="PF00216">
    <property type="entry name" value="Bac_DNA_binding"/>
    <property type="match status" value="1"/>
</dbReference>
<dbReference type="PRINTS" id="PR01727">
    <property type="entry name" value="DNABINDINGHU"/>
</dbReference>
<dbReference type="SMART" id="SM00411">
    <property type="entry name" value="BHL"/>
    <property type="match status" value="1"/>
</dbReference>
<dbReference type="SUPFAM" id="SSF47729">
    <property type="entry name" value="IHF-like DNA-binding proteins"/>
    <property type="match status" value="1"/>
</dbReference>
<dbReference type="PROSITE" id="PS00045">
    <property type="entry name" value="HISTONE_LIKE"/>
    <property type="match status" value="1"/>
</dbReference>
<gene>
    <name evidence="1" type="primary">ihfA</name>
    <name evidence="1" type="synonym">himA</name>
    <name type="ordered locus">Psyr_2168</name>
</gene>
<evidence type="ECO:0000255" key="1">
    <source>
        <dbReference type="HAMAP-Rule" id="MF_00380"/>
    </source>
</evidence>
<evidence type="ECO:0000256" key="2">
    <source>
        <dbReference type="SAM" id="MobiDB-lite"/>
    </source>
</evidence>
<name>IHFA_PSEU2</name>